<protein>
    <recommendedName>
        <fullName evidence="1">Dihydroorotate dehydrogenase (quinone)</fullName>
        <ecNumber evidence="1">1.3.5.2</ecNumber>
    </recommendedName>
    <alternativeName>
        <fullName evidence="1">DHOdehase</fullName>
        <shortName evidence="1">DHOD</shortName>
        <shortName evidence="1">DHODase</shortName>
    </alternativeName>
    <alternativeName>
        <fullName evidence="1">Dihydroorotate oxidase</fullName>
    </alternativeName>
</protein>
<sequence>MDFYRLLLRPLLLSQLNVDPEWLTRNALGFLATLARSRSPLAANLRSYLRQTYGFQDPRLAMSLWGLTFATPVGLAAGFDKDGIAAPLWSDLGFGFAELGTVTALAQPGNPRPRLFRIPQDLAAFNRMGFNNASAEALADTLRGYFPEGQRSIPIGINLGKSKLTPLSGAVSDYVSSFRSLRSLGDYFVVNVSSPNTPGLRSLQAVTELEPILAALQAENTEQRPLLLKIAPDLVDEEVVAIAHLAQRQQLAGIIATNTTIDKSLLSVEHLPGRREPLATEAGGISGAPLRSRSTEVIRLLHRTTQGQLPIIGVGGIFSAEDAWQKIVAGASLVQVYTGWVYEGPLLVKTIQQGLLERLDSAGLPNLAAAVGSAAIDS</sequence>
<name>PYRD_SYNE7</name>
<comment type="function">
    <text evidence="1">Catalyzes the conversion of dihydroorotate to orotate with quinone as electron acceptor.</text>
</comment>
<comment type="catalytic activity">
    <reaction evidence="1">
        <text>(S)-dihydroorotate + a quinone = orotate + a quinol</text>
        <dbReference type="Rhea" id="RHEA:30187"/>
        <dbReference type="ChEBI" id="CHEBI:24646"/>
        <dbReference type="ChEBI" id="CHEBI:30839"/>
        <dbReference type="ChEBI" id="CHEBI:30864"/>
        <dbReference type="ChEBI" id="CHEBI:132124"/>
        <dbReference type="EC" id="1.3.5.2"/>
    </reaction>
</comment>
<comment type="cofactor">
    <cofactor evidence="1">
        <name>FMN</name>
        <dbReference type="ChEBI" id="CHEBI:58210"/>
    </cofactor>
    <text evidence="1">Binds 1 FMN per subunit.</text>
</comment>
<comment type="pathway">
    <text evidence="1">Pyrimidine metabolism; UMP biosynthesis via de novo pathway; orotate from (S)-dihydroorotate (quinone route): step 1/1.</text>
</comment>
<comment type="subunit">
    <text evidence="1">Monomer.</text>
</comment>
<comment type="subcellular location">
    <subcellularLocation>
        <location evidence="1">Cell membrane</location>
        <topology evidence="1">Peripheral membrane protein</topology>
    </subcellularLocation>
</comment>
<comment type="similarity">
    <text evidence="1">Belongs to the dihydroorotate dehydrogenase family. Type 2 subfamily.</text>
</comment>
<dbReference type="EC" id="1.3.5.2" evidence="1"/>
<dbReference type="EMBL" id="CP000100">
    <property type="protein sequence ID" value="ABB56322.1"/>
    <property type="molecule type" value="Genomic_DNA"/>
</dbReference>
<dbReference type="RefSeq" id="WP_011377521.1">
    <property type="nucleotide sequence ID" value="NZ_JACJTX010000002.1"/>
</dbReference>
<dbReference type="SMR" id="Q31RJ7"/>
<dbReference type="STRING" id="1140.Synpcc7942_0290"/>
<dbReference type="PaxDb" id="1140-Synpcc7942_0290"/>
<dbReference type="KEGG" id="syf:Synpcc7942_0290"/>
<dbReference type="eggNOG" id="COG0167">
    <property type="taxonomic scope" value="Bacteria"/>
</dbReference>
<dbReference type="HOGENOM" id="CLU_013640_2_0_3"/>
<dbReference type="OrthoDB" id="9802377at2"/>
<dbReference type="BioCyc" id="SYNEL:SYNPCC7942_0290-MONOMER"/>
<dbReference type="UniPathway" id="UPA00070">
    <property type="reaction ID" value="UER00946"/>
</dbReference>
<dbReference type="Proteomes" id="UP000889800">
    <property type="component" value="Chromosome"/>
</dbReference>
<dbReference type="GO" id="GO:0005737">
    <property type="term" value="C:cytoplasm"/>
    <property type="evidence" value="ECO:0007669"/>
    <property type="project" value="InterPro"/>
</dbReference>
<dbReference type="GO" id="GO:0005886">
    <property type="term" value="C:plasma membrane"/>
    <property type="evidence" value="ECO:0007669"/>
    <property type="project" value="UniProtKB-SubCell"/>
</dbReference>
<dbReference type="GO" id="GO:0106430">
    <property type="term" value="F:dihydroorotate dehydrogenase (quinone) activity"/>
    <property type="evidence" value="ECO:0007669"/>
    <property type="project" value="UniProtKB-EC"/>
</dbReference>
<dbReference type="GO" id="GO:0006207">
    <property type="term" value="P:'de novo' pyrimidine nucleobase biosynthetic process"/>
    <property type="evidence" value="ECO:0007669"/>
    <property type="project" value="InterPro"/>
</dbReference>
<dbReference type="GO" id="GO:0044205">
    <property type="term" value="P:'de novo' UMP biosynthetic process"/>
    <property type="evidence" value="ECO:0007669"/>
    <property type="project" value="UniProtKB-UniRule"/>
</dbReference>
<dbReference type="CDD" id="cd04738">
    <property type="entry name" value="DHOD_2_like"/>
    <property type="match status" value="1"/>
</dbReference>
<dbReference type="Gene3D" id="3.20.20.70">
    <property type="entry name" value="Aldolase class I"/>
    <property type="match status" value="1"/>
</dbReference>
<dbReference type="HAMAP" id="MF_00225">
    <property type="entry name" value="DHO_dh_type2"/>
    <property type="match status" value="1"/>
</dbReference>
<dbReference type="InterPro" id="IPR013785">
    <property type="entry name" value="Aldolase_TIM"/>
</dbReference>
<dbReference type="InterPro" id="IPR050074">
    <property type="entry name" value="DHO_dehydrogenase"/>
</dbReference>
<dbReference type="InterPro" id="IPR005719">
    <property type="entry name" value="Dihydroorotate_DH_2"/>
</dbReference>
<dbReference type="InterPro" id="IPR005720">
    <property type="entry name" value="Dihydroorotate_DH_cat"/>
</dbReference>
<dbReference type="InterPro" id="IPR001295">
    <property type="entry name" value="Dihydroorotate_DH_CS"/>
</dbReference>
<dbReference type="NCBIfam" id="NF003651">
    <property type="entry name" value="PRK05286.2-4"/>
    <property type="match status" value="1"/>
</dbReference>
<dbReference type="NCBIfam" id="NF003652">
    <property type="entry name" value="PRK05286.2-5"/>
    <property type="match status" value="1"/>
</dbReference>
<dbReference type="NCBIfam" id="TIGR01036">
    <property type="entry name" value="pyrD_sub2"/>
    <property type="match status" value="1"/>
</dbReference>
<dbReference type="PANTHER" id="PTHR48109:SF4">
    <property type="entry name" value="DIHYDROOROTATE DEHYDROGENASE (QUINONE), MITOCHONDRIAL"/>
    <property type="match status" value="1"/>
</dbReference>
<dbReference type="PANTHER" id="PTHR48109">
    <property type="entry name" value="DIHYDROOROTATE DEHYDROGENASE (QUINONE), MITOCHONDRIAL-RELATED"/>
    <property type="match status" value="1"/>
</dbReference>
<dbReference type="Pfam" id="PF01180">
    <property type="entry name" value="DHO_dh"/>
    <property type="match status" value="1"/>
</dbReference>
<dbReference type="SUPFAM" id="SSF51395">
    <property type="entry name" value="FMN-linked oxidoreductases"/>
    <property type="match status" value="1"/>
</dbReference>
<dbReference type="PROSITE" id="PS00911">
    <property type="entry name" value="DHODEHASE_1"/>
    <property type="match status" value="1"/>
</dbReference>
<dbReference type="PROSITE" id="PS00912">
    <property type="entry name" value="DHODEHASE_2"/>
    <property type="match status" value="1"/>
</dbReference>
<proteinExistence type="inferred from homology"/>
<gene>
    <name evidence="1" type="primary">pyrD</name>
    <name type="ordered locus">Synpcc7942_0290</name>
</gene>
<reference key="1">
    <citation type="submission" date="2005-08" db="EMBL/GenBank/DDBJ databases">
        <title>Complete sequence of chromosome 1 of Synechococcus elongatus PCC 7942.</title>
        <authorList>
            <consortium name="US DOE Joint Genome Institute"/>
            <person name="Copeland A."/>
            <person name="Lucas S."/>
            <person name="Lapidus A."/>
            <person name="Barry K."/>
            <person name="Detter J.C."/>
            <person name="Glavina T."/>
            <person name="Hammon N."/>
            <person name="Israni S."/>
            <person name="Pitluck S."/>
            <person name="Schmutz J."/>
            <person name="Larimer F."/>
            <person name="Land M."/>
            <person name="Kyrpides N."/>
            <person name="Lykidis A."/>
            <person name="Golden S."/>
            <person name="Richardson P."/>
        </authorList>
    </citation>
    <scope>NUCLEOTIDE SEQUENCE [LARGE SCALE GENOMIC DNA]</scope>
    <source>
        <strain>ATCC 33912 / PCC 7942 / FACHB-805</strain>
    </source>
</reference>
<keyword id="KW-1003">Cell membrane</keyword>
<keyword id="KW-0285">Flavoprotein</keyword>
<keyword id="KW-0288">FMN</keyword>
<keyword id="KW-0472">Membrane</keyword>
<keyword id="KW-0560">Oxidoreductase</keyword>
<keyword id="KW-0665">Pyrimidine biosynthesis</keyword>
<keyword id="KW-1185">Reference proteome</keyword>
<organism>
    <name type="scientific">Synechococcus elongatus (strain ATCC 33912 / PCC 7942 / FACHB-805)</name>
    <name type="common">Anacystis nidulans R2</name>
    <dbReference type="NCBI Taxonomy" id="1140"/>
    <lineage>
        <taxon>Bacteria</taxon>
        <taxon>Bacillati</taxon>
        <taxon>Cyanobacteriota</taxon>
        <taxon>Cyanophyceae</taxon>
        <taxon>Synechococcales</taxon>
        <taxon>Synechococcaceae</taxon>
        <taxon>Synechococcus</taxon>
    </lineage>
</organism>
<feature type="chain" id="PRO_1000024239" description="Dihydroorotate dehydrogenase (quinone)">
    <location>
        <begin position="1"/>
        <end position="378"/>
    </location>
</feature>
<feature type="active site" description="Nucleophile" evidence="1">
    <location>
        <position position="194"/>
    </location>
</feature>
<feature type="binding site" evidence="1">
    <location>
        <begin position="77"/>
        <end position="81"/>
    </location>
    <ligand>
        <name>FMN</name>
        <dbReference type="ChEBI" id="CHEBI:58210"/>
    </ligand>
</feature>
<feature type="binding site" evidence="1">
    <location>
        <position position="81"/>
    </location>
    <ligand>
        <name>substrate</name>
    </ligand>
</feature>
<feature type="binding site" evidence="1">
    <location>
        <position position="101"/>
    </location>
    <ligand>
        <name>FMN</name>
        <dbReference type="ChEBI" id="CHEBI:58210"/>
    </ligand>
</feature>
<feature type="binding site" evidence="1">
    <location>
        <begin position="126"/>
        <end position="130"/>
    </location>
    <ligand>
        <name>substrate</name>
    </ligand>
</feature>
<feature type="binding site" evidence="1">
    <location>
        <position position="158"/>
    </location>
    <ligand>
        <name>FMN</name>
        <dbReference type="ChEBI" id="CHEBI:58210"/>
    </ligand>
</feature>
<feature type="binding site" evidence="1">
    <location>
        <position position="191"/>
    </location>
    <ligand>
        <name>FMN</name>
        <dbReference type="ChEBI" id="CHEBI:58210"/>
    </ligand>
</feature>
<feature type="binding site" evidence="1">
    <location>
        <position position="191"/>
    </location>
    <ligand>
        <name>substrate</name>
    </ligand>
</feature>
<feature type="binding site" evidence="1">
    <location>
        <position position="196"/>
    </location>
    <ligand>
        <name>substrate</name>
    </ligand>
</feature>
<feature type="binding site" evidence="1">
    <location>
        <position position="229"/>
    </location>
    <ligand>
        <name>FMN</name>
        <dbReference type="ChEBI" id="CHEBI:58210"/>
    </ligand>
</feature>
<feature type="binding site" evidence="1">
    <location>
        <position position="257"/>
    </location>
    <ligand>
        <name>FMN</name>
        <dbReference type="ChEBI" id="CHEBI:58210"/>
    </ligand>
</feature>
<feature type="binding site" evidence="1">
    <location>
        <begin position="258"/>
        <end position="259"/>
    </location>
    <ligand>
        <name>substrate</name>
    </ligand>
</feature>
<feature type="binding site" evidence="1">
    <location>
        <position position="287"/>
    </location>
    <ligand>
        <name>FMN</name>
        <dbReference type="ChEBI" id="CHEBI:58210"/>
    </ligand>
</feature>
<feature type="binding site" evidence="1">
    <location>
        <position position="316"/>
    </location>
    <ligand>
        <name>FMN</name>
        <dbReference type="ChEBI" id="CHEBI:58210"/>
    </ligand>
</feature>
<feature type="binding site" evidence="1">
    <location>
        <begin position="337"/>
        <end position="338"/>
    </location>
    <ligand>
        <name>FMN</name>
        <dbReference type="ChEBI" id="CHEBI:58210"/>
    </ligand>
</feature>
<evidence type="ECO:0000255" key="1">
    <source>
        <dbReference type="HAMAP-Rule" id="MF_00225"/>
    </source>
</evidence>
<accession>Q31RJ7</accession>